<keyword id="KW-0067">ATP-binding</keyword>
<keyword id="KW-0963">Cytoplasm</keyword>
<keyword id="KW-0227">DNA damage</keyword>
<keyword id="KW-0234">DNA repair</keyword>
<keyword id="KW-0347">Helicase</keyword>
<keyword id="KW-0378">Hydrolase</keyword>
<keyword id="KW-0413">Isomerase</keyword>
<keyword id="KW-0547">Nucleotide-binding</keyword>
<keyword id="KW-0539">Nucleus</keyword>
<keyword id="KW-1185">Reference proteome</keyword>
<keyword id="KW-0677">Repeat</keyword>
<dbReference type="EC" id="5.6.2.4" evidence="1"/>
<dbReference type="EMBL" id="CABZ01076009">
    <property type="status" value="NOT_ANNOTATED_CDS"/>
    <property type="molecule type" value="Genomic_DNA"/>
</dbReference>
<dbReference type="EMBL" id="CABZ01076010">
    <property type="status" value="NOT_ANNOTATED_CDS"/>
    <property type="molecule type" value="Genomic_DNA"/>
</dbReference>
<dbReference type="EMBL" id="CABZ01076011">
    <property type="status" value="NOT_ANNOTATED_CDS"/>
    <property type="molecule type" value="Genomic_DNA"/>
</dbReference>
<dbReference type="EMBL" id="CABZ01076012">
    <property type="status" value="NOT_ANNOTATED_CDS"/>
    <property type="molecule type" value="Genomic_DNA"/>
</dbReference>
<dbReference type="EMBL" id="CABZ01076013">
    <property type="status" value="NOT_ANNOTATED_CDS"/>
    <property type="molecule type" value="Genomic_DNA"/>
</dbReference>
<dbReference type="EMBL" id="CABZ01076014">
    <property type="status" value="NOT_ANNOTATED_CDS"/>
    <property type="molecule type" value="Genomic_DNA"/>
</dbReference>
<dbReference type="EMBL" id="CABZ01076015">
    <property type="status" value="NOT_ANNOTATED_CDS"/>
    <property type="molecule type" value="Genomic_DNA"/>
</dbReference>
<dbReference type="EMBL" id="CABZ01076016">
    <property type="status" value="NOT_ANNOTATED_CDS"/>
    <property type="molecule type" value="Genomic_DNA"/>
</dbReference>
<dbReference type="EMBL" id="CABZ01076017">
    <property type="status" value="NOT_ANNOTATED_CDS"/>
    <property type="molecule type" value="Genomic_DNA"/>
</dbReference>
<dbReference type="EMBL" id="CABZ01076018">
    <property type="status" value="NOT_ANNOTATED_CDS"/>
    <property type="molecule type" value="Genomic_DNA"/>
</dbReference>
<dbReference type="EMBL" id="CU468254">
    <property type="status" value="NOT_ANNOTATED_CDS"/>
    <property type="molecule type" value="Genomic_DNA"/>
</dbReference>
<dbReference type="EMBL" id="CU915569">
    <property type="status" value="NOT_ANNOTATED_CDS"/>
    <property type="molecule type" value="Genomic_DNA"/>
</dbReference>
<dbReference type="SMR" id="E7F8F4"/>
<dbReference type="FunCoup" id="E7F8F4">
    <property type="interactions" value="2036"/>
</dbReference>
<dbReference type="STRING" id="7955.ENSDARP00000106925"/>
<dbReference type="PaxDb" id="7955-ENSDARP00000100613"/>
<dbReference type="PeptideAtlas" id="E7F8F4"/>
<dbReference type="AGR" id="ZFIN:ZDB-GENE-130214-2"/>
<dbReference type="ZFIN" id="ZDB-GENE-130214-2">
    <property type="gene designation" value="ascc3"/>
</dbReference>
<dbReference type="eggNOG" id="KOG0952">
    <property type="taxonomic scope" value="Eukaryota"/>
</dbReference>
<dbReference type="InParanoid" id="E7F8F4"/>
<dbReference type="PhylomeDB" id="E7F8F4"/>
<dbReference type="PRO" id="PR:E7F8F4"/>
<dbReference type="Proteomes" id="UP000000437">
    <property type="component" value="Unplaced"/>
</dbReference>
<dbReference type="GO" id="GO:0005829">
    <property type="term" value="C:cytosol"/>
    <property type="evidence" value="ECO:0000250"/>
    <property type="project" value="UniProtKB"/>
</dbReference>
<dbReference type="GO" id="GO:0016607">
    <property type="term" value="C:nuclear speck"/>
    <property type="evidence" value="ECO:0007669"/>
    <property type="project" value="UniProtKB-SubCell"/>
</dbReference>
<dbReference type="GO" id="GO:0005634">
    <property type="term" value="C:nucleus"/>
    <property type="evidence" value="ECO:0000250"/>
    <property type="project" value="UniProtKB"/>
</dbReference>
<dbReference type="GO" id="GO:0043138">
    <property type="term" value="F:3'-5' DNA helicase activity"/>
    <property type="evidence" value="ECO:0000250"/>
    <property type="project" value="UniProtKB"/>
</dbReference>
<dbReference type="GO" id="GO:0005524">
    <property type="term" value="F:ATP binding"/>
    <property type="evidence" value="ECO:0007669"/>
    <property type="project" value="UniProtKB-KW"/>
</dbReference>
<dbReference type="GO" id="GO:0016887">
    <property type="term" value="F:ATP hydrolysis activity"/>
    <property type="evidence" value="ECO:0000250"/>
    <property type="project" value="UniProtKB"/>
</dbReference>
<dbReference type="GO" id="GO:0003676">
    <property type="term" value="F:nucleic acid binding"/>
    <property type="evidence" value="ECO:0007669"/>
    <property type="project" value="InterPro"/>
</dbReference>
<dbReference type="GO" id="GO:0003724">
    <property type="term" value="F:RNA helicase activity"/>
    <property type="evidence" value="ECO:0000318"/>
    <property type="project" value="GO_Central"/>
</dbReference>
<dbReference type="GO" id="GO:0006307">
    <property type="term" value="P:DNA alkylation repair"/>
    <property type="evidence" value="ECO:0000250"/>
    <property type="project" value="UniProtKB"/>
</dbReference>
<dbReference type="GO" id="GO:0072344">
    <property type="term" value="P:rescue of stalled ribosome"/>
    <property type="evidence" value="ECO:0000250"/>
    <property type="project" value="UniProtKB"/>
</dbReference>
<dbReference type="GO" id="GO:0032790">
    <property type="term" value="P:ribosome disassembly"/>
    <property type="evidence" value="ECO:0000250"/>
    <property type="project" value="UniProtKB"/>
</dbReference>
<dbReference type="GO" id="GO:1990116">
    <property type="term" value="P:ribosome-associated ubiquitin-dependent protein catabolic process"/>
    <property type="evidence" value="ECO:0000250"/>
    <property type="project" value="UniProtKB"/>
</dbReference>
<dbReference type="CDD" id="cd18020">
    <property type="entry name" value="DEXHc_ASCC3_1"/>
    <property type="match status" value="1"/>
</dbReference>
<dbReference type="CDD" id="cd18022">
    <property type="entry name" value="DEXHc_ASCC3_2"/>
    <property type="match status" value="1"/>
</dbReference>
<dbReference type="CDD" id="cd18795">
    <property type="entry name" value="SF2_C_Ski2"/>
    <property type="match status" value="2"/>
</dbReference>
<dbReference type="FunFam" id="3.40.50.300:FF:000198">
    <property type="entry name" value="Activating signal cointegrator 1 complex subunit"/>
    <property type="match status" value="1"/>
</dbReference>
<dbReference type="FunFam" id="3.40.50.300:FF:000231">
    <property type="entry name" value="Activating signal cointegrator 1 complex subunit 3"/>
    <property type="match status" value="1"/>
</dbReference>
<dbReference type="FunFam" id="1.10.150.20:FF:000028">
    <property type="entry name" value="activating signal cointegrator 1 complex subunit 3"/>
    <property type="match status" value="1"/>
</dbReference>
<dbReference type="FunFam" id="2.60.40.150:FF:000004">
    <property type="entry name" value="RNA helicase, activating signal cointegrator 1"/>
    <property type="match status" value="1"/>
</dbReference>
<dbReference type="FunFam" id="3.40.50.300:FF:000102">
    <property type="entry name" value="RNA helicase, activating signal cointegrator 1"/>
    <property type="match status" value="1"/>
</dbReference>
<dbReference type="FunFam" id="1.10.10.10:FF:000012">
    <property type="entry name" value="U5 small nuclear ribonucleoprotein helicase"/>
    <property type="match status" value="1"/>
</dbReference>
<dbReference type="FunFam" id="1.10.10.10:FF:000024">
    <property type="entry name" value="U5 small nuclear ribonucleoprotein helicase"/>
    <property type="match status" value="1"/>
</dbReference>
<dbReference type="FunFam" id="3.40.50.300:FF:000062">
    <property type="entry name" value="U5 small nuclear ribonucleoprotein helicase"/>
    <property type="match status" value="1"/>
</dbReference>
<dbReference type="Gene3D" id="1.10.150.20">
    <property type="entry name" value="5' to 3' exonuclease, C-terminal subdomain"/>
    <property type="match status" value="1"/>
</dbReference>
<dbReference type="Gene3D" id="2.60.40.150">
    <property type="entry name" value="C2 domain"/>
    <property type="match status" value="1"/>
</dbReference>
<dbReference type="Gene3D" id="3.40.50.300">
    <property type="entry name" value="P-loop containing nucleotide triphosphate hydrolases"/>
    <property type="match status" value="4"/>
</dbReference>
<dbReference type="Gene3D" id="1.10.3380.10">
    <property type="entry name" value="Sec63 N-terminal domain-like domain"/>
    <property type="match status" value="4"/>
</dbReference>
<dbReference type="Gene3D" id="1.10.10.10">
    <property type="entry name" value="Winged helix-like DNA-binding domain superfamily/Winged helix DNA-binding domain"/>
    <property type="match status" value="2"/>
</dbReference>
<dbReference type="InterPro" id="IPR003593">
    <property type="entry name" value="AAA+_ATPase"/>
</dbReference>
<dbReference type="InterPro" id="IPR035892">
    <property type="entry name" value="C2_domain_sf"/>
</dbReference>
<dbReference type="InterPro" id="IPR011545">
    <property type="entry name" value="DEAD/DEAH_box_helicase_dom"/>
</dbReference>
<dbReference type="InterPro" id="IPR050474">
    <property type="entry name" value="Hel308_SKI2-like"/>
</dbReference>
<dbReference type="InterPro" id="IPR014001">
    <property type="entry name" value="Helicase_ATP-bd"/>
</dbReference>
<dbReference type="InterPro" id="IPR001650">
    <property type="entry name" value="Helicase_C-like"/>
</dbReference>
<dbReference type="InterPro" id="IPR027417">
    <property type="entry name" value="P-loop_NTPase"/>
</dbReference>
<dbReference type="InterPro" id="IPR004179">
    <property type="entry name" value="Sec63-dom"/>
</dbReference>
<dbReference type="InterPro" id="IPR036388">
    <property type="entry name" value="WH-like_DNA-bd_sf"/>
</dbReference>
<dbReference type="InterPro" id="IPR036390">
    <property type="entry name" value="WH_DNA-bd_sf"/>
</dbReference>
<dbReference type="PANTHER" id="PTHR47961:SF13">
    <property type="entry name" value="ACTIVATING SIGNAL COINTEGRATOR 1 COMPLEX SUBUNIT 3"/>
    <property type="match status" value="1"/>
</dbReference>
<dbReference type="PANTHER" id="PTHR47961">
    <property type="entry name" value="DNA POLYMERASE THETA, PUTATIVE (AFU_ORTHOLOGUE AFUA_1G05260)-RELATED"/>
    <property type="match status" value="1"/>
</dbReference>
<dbReference type="Pfam" id="PF00270">
    <property type="entry name" value="DEAD"/>
    <property type="match status" value="2"/>
</dbReference>
<dbReference type="Pfam" id="PF00271">
    <property type="entry name" value="Helicase_C"/>
    <property type="match status" value="2"/>
</dbReference>
<dbReference type="Pfam" id="PF02889">
    <property type="entry name" value="Sec63"/>
    <property type="match status" value="4"/>
</dbReference>
<dbReference type="Pfam" id="PF23445">
    <property type="entry name" value="SNRNP200_wHTH"/>
    <property type="match status" value="2"/>
</dbReference>
<dbReference type="SMART" id="SM00382">
    <property type="entry name" value="AAA"/>
    <property type="match status" value="2"/>
</dbReference>
<dbReference type="SMART" id="SM00487">
    <property type="entry name" value="DEXDc"/>
    <property type="match status" value="2"/>
</dbReference>
<dbReference type="SMART" id="SM00490">
    <property type="entry name" value="HELICc"/>
    <property type="match status" value="2"/>
</dbReference>
<dbReference type="SMART" id="SM00973">
    <property type="entry name" value="Sec63"/>
    <property type="match status" value="2"/>
</dbReference>
<dbReference type="SUPFAM" id="SSF52540">
    <property type="entry name" value="P-loop containing nucleoside triphosphate hydrolases"/>
    <property type="match status" value="3"/>
</dbReference>
<dbReference type="SUPFAM" id="SSF158702">
    <property type="entry name" value="Sec63 N-terminal domain-like"/>
    <property type="match status" value="2"/>
</dbReference>
<dbReference type="SUPFAM" id="SSF46785">
    <property type="entry name" value="Winged helix' DNA-binding domain"/>
    <property type="match status" value="2"/>
</dbReference>
<dbReference type="PROSITE" id="PS51192">
    <property type="entry name" value="HELICASE_ATP_BIND_1"/>
    <property type="match status" value="2"/>
</dbReference>
<dbReference type="PROSITE" id="PS51194">
    <property type="entry name" value="HELICASE_CTER"/>
    <property type="match status" value="2"/>
</dbReference>
<protein>
    <recommendedName>
        <fullName>Activating signal cointegrator 1 complex subunit 3</fullName>
        <ecNumber evidence="1">5.6.2.4</ecNumber>
    </recommendedName>
</protein>
<accession>E7F8F4</accession>
<accession>E7F5Q7</accession>
<proteinExistence type="inferred from homology"/>
<feature type="chain" id="PRO_0000416918" description="Activating signal cointegrator 1 complex subunit 3">
    <location>
        <begin position="1"/>
        <end position="1534"/>
    </location>
</feature>
<feature type="domain" description="Helicase ATP-binding 1" evidence="2">
    <location>
        <begin position="83"/>
        <end position="267"/>
    </location>
</feature>
<feature type="domain" description="Helicase C-terminal 1" evidence="3">
    <location>
        <begin position="294"/>
        <end position="500"/>
    </location>
</feature>
<feature type="domain" description="SEC63 1">
    <location>
        <begin position="576"/>
        <end position="849"/>
    </location>
</feature>
<feature type="domain" description="Helicase ATP-binding 2" evidence="2">
    <location>
        <begin position="898"/>
        <end position="1073"/>
    </location>
</feature>
<feature type="domain" description="Helicase C-terminal 2" evidence="3">
    <location>
        <begin position="1106"/>
        <end position="1313"/>
    </location>
</feature>
<feature type="domain" description="SEC63 2">
    <location>
        <begin position="1374"/>
        <end position="1481"/>
    </location>
</feature>
<feature type="short sequence motif" description="DEVH box">
    <location>
        <begin position="209"/>
        <end position="212"/>
    </location>
</feature>
<feature type="short sequence motif" description="DEIH box">
    <location>
        <begin position="1015"/>
        <end position="1018"/>
    </location>
</feature>
<feature type="binding site" evidence="2">
    <location>
        <begin position="96"/>
        <end position="103"/>
    </location>
    <ligand>
        <name>ATP</name>
        <dbReference type="ChEBI" id="CHEBI:30616"/>
    </ligand>
</feature>
<feature type="binding site" evidence="2">
    <location>
        <begin position="911"/>
        <end position="918"/>
    </location>
    <ligand>
        <name>ATP</name>
        <dbReference type="ChEBI" id="CHEBI:30616"/>
    </ligand>
</feature>
<organism>
    <name type="scientific">Danio rerio</name>
    <name type="common">Zebrafish</name>
    <name type="synonym">Brachydanio rerio</name>
    <dbReference type="NCBI Taxonomy" id="7955"/>
    <lineage>
        <taxon>Eukaryota</taxon>
        <taxon>Metazoa</taxon>
        <taxon>Chordata</taxon>
        <taxon>Craniata</taxon>
        <taxon>Vertebrata</taxon>
        <taxon>Euteleostomi</taxon>
        <taxon>Actinopterygii</taxon>
        <taxon>Neopterygii</taxon>
        <taxon>Teleostei</taxon>
        <taxon>Ostariophysi</taxon>
        <taxon>Cypriniformes</taxon>
        <taxon>Danionidae</taxon>
        <taxon>Danioninae</taxon>
        <taxon>Danio</taxon>
    </lineage>
</organism>
<reference key="1">
    <citation type="journal article" date="2013" name="Nature">
        <title>The zebrafish reference genome sequence and its relationship to the human genome.</title>
        <authorList>
            <person name="Howe K."/>
            <person name="Clark M.D."/>
            <person name="Torroja C.F."/>
            <person name="Torrance J."/>
            <person name="Berthelot C."/>
            <person name="Muffato M."/>
            <person name="Collins J.E."/>
            <person name="Humphray S."/>
            <person name="McLaren K."/>
            <person name="Matthews L."/>
            <person name="McLaren S."/>
            <person name="Sealy I."/>
            <person name="Caccamo M."/>
            <person name="Churcher C."/>
            <person name="Scott C."/>
            <person name="Barrett J.C."/>
            <person name="Koch R."/>
            <person name="Rauch G.J."/>
            <person name="White S."/>
            <person name="Chow W."/>
            <person name="Kilian B."/>
            <person name="Quintais L.T."/>
            <person name="Guerra-Assuncao J.A."/>
            <person name="Zhou Y."/>
            <person name="Gu Y."/>
            <person name="Yen J."/>
            <person name="Vogel J.H."/>
            <person name="Eyre T."/>
            <person name="Redmond S."/>
            <person name="Banerjee R."/>
            <person name="Chi J."/>
            <person name="Fu B."/>
            <person name="Langley E."/>
            <person name="Maguire S.F."/>
            <person name="Laird G.K."/>
            <person name="Lloyd D."/>
            <person name="Kenyon E."/>
            <person name="Donaldson S."/>
            <person name="Sehra H."/>
            <person name="Almeida-King J."/>
            <person name="Loveland J."/>
            <person name="Trevanion S."/>
            <person name="Jones M."/>
            <person name="Quail M."/>
            <person name="Willey D."/>
            <person name="Hunt A."/>
            <person name="Burton J."/>
            <person name="Sims S."/>
            <person name="McLay K."/>
            <person name="Plumb B."/>
            <person name="Davis J."/>
            <person name="Clee C."/>
            <person name="Oliver K."/>
            <person name="Clark R."/>
            <person name="Riddle C."/>
            <person name="Elliot D."/>
            <person name="Threadgold G."/>
            <person name="Harden G."/>
            <person name="Ware D."/>
            <person name="Begum S."/>
            <person name="Mortimore B."/>
            <person name="Kerry G."/>
            <person name="Heath P."/>
            <person name="Phillimore B."/>
            <person name="Tracey A."/>
            <person name="Corby N."/>
            <person name="Dunn M."/>
            <person name="Johnson C."/>
            <person name="Wood J."/>
            <person name="Clark S."/>
            <person name="Pelan S."/>
            <person name="Griffiths G."/>
            <person name="Smith M."/>
            <person name="Glithero R."/>
            <person name="Howden P."/>
            <person name="Barker N."/>
            <person name="Lloyd C."/>
            <person name="Stevens C."/>
            <person name="Harley J."/>
            <person name="Holt K."/>
            <person name="Panagiotidis G."/>
            <person name="Lovell J."/>
            <person name="Beasley H."/>
            <person name="Henderson C."/>
            <person name="Gordon D."/>
            <person name="Auger K."/>
            <person name="Wright D."/>
            <person name="Collins J."/>
            <person name="Raisen C."/>
            <person name="Dyer L."/>
            <person name="Leung K."/>
            <person name="Robertson L."/>
            <person name="Ambridge K."/>
            <person name="Leongamornlert D."/>
            <person name="McGuire S."/>
            <person name="Gilderthorp R."/>
            <person name="Griffiths C."/>
            <person name="Manthravadi D."/>
            <person name="Nichol S."/>
            <person name="Barker G."/>
            <person name="Whitehead S."/>
            <person name="Kay M."/>
            <person name="Brown J."/>
            <person name="Murnane C."/>
            <person name="Gray E."/>
            <person name="Humphries M."/>
            <person name="Sycamore N."/>
            <person name="Barker D."/>
            <person name="Saunders D."/>
            <person name="Wallis J."/>
            <person name="Babbage A."/>
            <person name="Hammond S."/>
            <person name="Mashreghi-Mohammadi M."/>
            <person name="Barr L."/>
            <person name="Martin S."/>
            <person name="Wray P."/>
            <person name="Ellington A."/>
            <person name="Matthews N."/>
            <person name="Ellwood M."/>
            <person name="Woodmansey R."/>
            <person name="Clark G."/>
            <person name="Cooper J."/>
            <person name="Tromans A."/>
            <person name="Grafham D."/>
            <person name="Skuce C."/>
            <person name="Pandian R."/>
            <person name="Andrews R."/>
            <person name="Harrison E."/>
            <person name="Kimberley A."/>
            <person name="Garnett J."/>
            <person name="Fosker N."/>
            <person name="Hall R."/>
            <person name="Garner P."/>
            <person name="Kelly D."/>
            <person name="Bird C."/>
            <person name="Palmer S."/>
            <person name="Gehring I."/>
            <person name="Berger A."/>
            <person name="Dooley C.M."/>
            <person name="Ersan-Urun Z."/>
            <person name="Eser C."/>
            <person name="Geiger H."/>
            <person name="Geisler M."/>
            <person name="Karotki L."/>
            <person name="Kirn A."/>
            <person name="Konantz J."/>
            <person name="Konantz M."/>
            <person name="Oberlander M."/>
            <person name="Rudolph-Geiger S."/>
            <person name="Teucke M."/>
            <person name="Lanz C."/>
            <person name="Raddatz G."/>
            <person name="Osoegawa K."/>
            <person name="Zhu B."/>
            <person name="Rapp A."/>
            <person name="Widaa S."/>
            <person name="Langford C."/>
            <person name="Yang F."/>
            <person name="Schuster S.C."/>
            <person name="Carter N.P."/>
            <person name="Harrow J."/>
            <person name="Ning Z."/>
            <person name="Herrero J."/>
            <person name="Searle S.M."/>
            <person name="Enright A."/>
            <person name="Geisler R."/>
            <person name="Plasterk R.H."/>
            <person name="Lee C."/>
            <person name="Westerfield M."/>
            <person name="de Jong P.J."/>
            <person name="Zon L.I."/>
            <person name="Postlethwait J.H."/>
            <person name="Nusslein-Volhard C."/>
            <person name="Hubbard T.J."/>
            <person name="Roest Crollius H."/>
            <person name="Rogers J."/>
            <person name="Stemple D.L."/>
        </authorList>
    </citation>
    <scope>NUCLEOTIDE SEQUENCE [LARGE SCALE GENOMIC DNA]</scope>
    <source>
        <strain>Tuebingen</strain>
    </source>
</reference>
<evidence type="ECO:0000250" key="1">
    <source>
        <dbReference type="UniProtKB" id="Q8N3C0"/>
    </source>
</evidence>
<evidence type="ECO:0000255" key="2">
    <source>
        <dbReference type="PROSITE-ProRule" id="PRU00541"/>
    </source>
</evidence>
<evidence type="ECO:0000255" key="3">
    <source>
        <dbReference type="PROSITE-ProRule" id="PRU00542"/>
    </source>
</evidence>
<evidence type="ECO:0000305" key="4"/>
<gene>
    <name type="primary">ascc3</name>
</gene>
<name>ASCC3_DANRE</name>
<sequence length="1534" mass="175219">MVDVNDVIHANEKAQIDFAQMLLPEGIRRDNNKMYEEVEIPPNEPMPIGFEEKAVFVSELDEIGQLVFKGMKRLNRIQSIVFETAYNTNENLLICAPTGAGKTNIAMLTILHEIRQHLQPGGVIRKDQFKIVYVAPMKALAAEMTNYFSKRLEPLGIAVKELTGDMQLTKGEILRTQMLVTTPEKWDVVTRKSVGDVALSQVVRLLILDEVHLLHEDRGPVLESLVARTLRQVESTQSMIRILGLSATLPNYLDVATFLHVNPFIGLFYFDSRFRPVPLGQSFVGIKTTNKVQQLHDMEEVCYEKVLKQIKAGHQVMVFVHARNSTVRTAMSLIEMAKNRGELSFFQVDQGADYGQCEKQIQRSRNKQMREMFPDGFGIHHAGMLRQDRSLMESMFSRGYLKVLVCTATLAWGVNLPAHAVIIKGTNIYDAKRGTLVDLGILDVMQIFGRAGRPQFDKYGEGTIITTHDKLSHYLTLLTQQNPIESQFQQSLADNLNAEIALGTVTNVDEAVRWLSYTYLYVRMRANPLAYGINHKAYQMDPQLELYRKELVVESGRKLDKARMIRFDERTGYFASTDLGRTASHFYIKYNTIESFNELFNAQNTEADVLSIVSKAEEFEQIKVRVQEEDADGKSSVQILCGSHHTNAARIMRALFEMALRKRWPAMTYRLLNLCKVMDKRLWGWAHPLRQFNTLPASALARMEDKNLTIDKLRDMGKDEIGHMLHHVNIGLKVKQCVHQIPAILLESSIQPITRTVLRVRLSITPDFRWNDQVHGSVGEPWWLWVEDPINDHIYHSEYFLLQKKQVVSGEPQQVVFTIPIFEPMPSQYYIRAVSDRWLGSEAVCIINFQHLILPERHPPHTELLDLQPLPITALGNREYESLYKFTHYNPIQTQIFHTLYHTDTNVLLGAPTGSGKTIAAEMAIFRVFNMYPTSKVVYIAPLKALVRERIEDWKIRIEEKLGRKVVELTGDNTPDMRAIAQADLIVTTPEKWDGVSRSWQNRSYVQKVAILIIDEIHLLGEDRGPVLEVIVSRTNFISSHTSKTVRVVGLSTALANARDLADWLGIGQVGLFNFRPSVRPVPLEVHIQGFPGQHYCPRMATMNKPVFQAIRTHSPAKPVLIFVSSRRQTRLTALDLIAFLATEDDPKQWLHQDEREMTDIIATIRESNLKLTLAFGIGMHHAGLHERDRKTVEELFVNCKIQVLIATSTLAWGVNFPAHLVIVKGTEYYDGKTRRYVDYPITDVLQMMGRAGRPQFDDQGKAVILVHDIKKDFYKKFLYEPFPVESSLLSVLSDHLNAEIAAGTVTSKQDAMDYITWTYFFRRLVMNPSYYNLDDISHETINKYLSNLVERSLRDLECSYCMEIQQDEQTIEPLTYGRISSYYYLKHQTIRMFKERLKPELPVHELLAILSLPCSDYGTDTKTVLDNAIRICQAMLDVVANEGWLVSALSLCNLVQMIIQARWLHDSSLLTLPHIQKQELYVFRRWSSRGVRAGCGHQGPIEGLPELIAACDGKEDIFTSMVKEVLQPNQISQ</sequence>
<comment type="function">
    <text evidence="1">3'-5' DNA helicase involved in repair of alkylated DNA. Promotes DNA unwinding to generate single-stranded substrate needed for alkbh3, enabling alkbh3 to process alkylated N3-methylcytosine (3mC) within double-stranded regions. Also involved in activation of the ribosome quality control (RQC) pathway, a pathway that degrades nascent peptide chains during problematic translation. Drives the splitting of stalled ribosomes.</text>
</comment>
<comment type="catalytic activity">
    <reaction evidence="1">
        <text>Couples ATP hydrolysis with the unwinding of duplex DNA by translocating in the 3'-5' direction.</text>
        <dbReference type="EC" id="5.6.2.4"/>
    </reaction>
</comment>
<comment type="catalytic activity">
    <reaction evidence="1">
        <text>ATP + H2O = ADP + phosphate + H(+)</text>
        <dbReference type="Rhea" id="RHEA:13065"/>
        <dbReference type="ChEBI" id="CHEBI:15377"/>
        <dbReference type="ChEBI" id="CHEBI:15378"/>
        <dbReference type="ChEBI" id="CHEBI:30616"/>
        <dbReference type="ChEBI" id="CHEBI:43474"/>
        <dbReference type="ChEBI" id="CHEBI:456216"/>
        <dbReference type="EC" id="5.6.2.4"/>
    </reaction>
</comment>
<comment type="subcellular location">
    <subcellularLocation>
        <location evidence="1">Nucleus</location>
    </subcellularLocation>
    <subcellularLocation>
        <location evidence="1">Nucleus speckle</location>
    </subcellularLocation>
    <subcellularLocation>
        <location evidence="1">Cytoplasm</location>
        <location evidence="1">Cytosol</location>
    </subcellularLocation>
    <text evidence="1">Colocalizes with alkbh3 and ascc2 in nuclear foci when cells have been exposed to alkylating agents that cause DNA damage.</text>
</comment>
<comment type="similarity">
    <text evidence="4">Belongs to the helicase family.</text>
</comment>